<gene>
    <name type="primary">yigL</name>
    <name type="ordered locus">b3826</name>
    <name type="ordered locus">JW5854</name>
</gene>
<protein>
    <recommendedName>
        <fullName>Pyridoxal phosphate phosphatase YigL</fullName>
        <ecNumber>3.1.3.74</ecNumber>
    </recommendedName>
    <alternativeName>
        <fullName>PLP phosphatase</fullName>
    </alternativeName>
    <alternativeName>
        <fullName>Sugar phosphatase</fullName>
        <ecNumber>3.1.3.23</ecNumber>
    </alternativeName>
</protein>
<sequence>MYQVVASDLDGTLLSPDHTLSPYAKETLKLLTARGINFVFATGRHHVDVGQIRDNLEIKSYMITSNGARVHDLDGNLIFAHNLDRDIASDLFGVVNDNPDIITNVYRDDEWFMNRHRPEEMRFFKEAVFQYALYEPGLLEPEGVSKVFFTCDSHEQLLPLEQAINARWGDRVNVSFSTLTCLEVMAGGVSKGHALEAVAKKLGYSLKDCIAFGDGMNDAEMLSMAGKGCIMGSAHQRLKDLHPELEVIGTNADDAVPHYLRKLYLS</sequence>
<comment type="function">
    <text evidence="2">Catalyzes Strongly the dephosphorylation of pyridoxal-phosphate (PLP) and moderately the dephosphorylation of 2-deoxyglucose 6-phosphate (2bGLU6P) and beta-glucose 6-phosphate (bGlu6P). Also hydrolyzes both purines (GMP and IMP) and pyrimidines as secondary substrates.</text>
</comment>
<comment type="catalytic activity">
    <reaction evidence="2">
        <text>pyridoxal 5'-phosphate + H2O = pyridoxal + phosphate</text>
        <dbReference type="Rhea" id="RHEA:20533"/>
        <dbReference type="ChEBI" id="CHEBI:15377"/>
        <dbReference type="ChEBI" id="CHEBI:17310"/>
        <dbReference type="ChEBI" id="CHEBI:43474"/>
        <dbReference type="ChEBI" id="CHEBI:597326"/>
        <dbReference type="EC" id="3.1.3.74"/>
    </reaction>
</comment>
<comment type="catalytic activity">
    <reaction evidence="2">
        <text>sugar phosphate + H2O = sugar + phosphate.</text>
        <dbReference type="EC" id="3.1.3.23"/>
    </reaction>
</comment>
<comment type="cofactor">
    <cofactor evidence="2">
        <name>Mg(2+)</name>
        <dbReference type="ChEBI" id="CHEBI:18420"/>
    </cofactor>
    <cofactor evidence="2">
        <name>Mn(2+)</name>
        <dbReference type="ChEBI" id="CHEBI:29035"/>
    </cofactor>
    <cofactor evidence="2">
        <name>Co(2+)</name>
        <dbReference type="ChEBI" id="CHEBI:48828"/>
    </cofactor>
    <cofactor evidence="2">
        <name>Zn(2+)</name>
        <dbReference type="ChEBI" id="CHEBI:29105"/>
    </cofactor>
    <text evidence="2">Magnesium. Can also use other divalent metal cations as manganese, cobalt or zinc.</text>
</comment>
<comment type="biophysicochemical properties">
    <kinetics>
        <KM evidence="2">1.5 mM for PLP (in the presence of magnesium ion as cofactor and at pH 9)</KM>
        <KM evidence="2">5.9 mM for bGlu6P (in the presence of magnesium ion as cofactor and at pH 9)</KM>
        <KM evidence="2">7.5 mM for 2bGLU6P (in the presence of magnesium ion as cofactor and at pH 9)</KM>
    </kinetics>
    <phDependence>
        <text evidence="2">Optimum pH is between 6 and 7.5.</text>
    </phDependence>
</comment>
<comment type="similarity">
    <text evidence="3">Belongs to the HAD-like hydrolase superfamily. Cof family.</text>
</comment>
<comment type="sequence caution" evidence="3">
    <conflict type="frameshift">
        <sequence resource="EMBL-CDS" id="AAA67622"/>
    </conflict>
</comment>
<name>YIGL_ECOLI</name>
<organism>
    <name type="scientific">Escherichia coli (strain K12)</name>
    <dbReference type="NCBI Taxonomy" id="83333"/>
    <lineage>
        <taxon>Bacteria</taxon>
        <taxon>Pseudomonadati</taxon>
        <taxon>Pseudomonadota</taxon>
        <taxon>Gammaproteobacteria</taxon>
        <taxon>Enterobacterales</taxon>
        <taxon>Enterobacteriaceae</taxon>
        <taxon>Escherichia</taxon>
    </lineage>
</organism>
<dbReference type="EC" id="3.1.3.74"/>
<dbReference type="EC" id="3.1.3.23"/>
<dbReference type="EMBL" id="M87049">
    <property type="protein sequence ID" value="AAA67622.1"/>
    <property type="status" value="ALT_FRAME"/>
    <property type="molecule type" value="Genomic_DNA"/>
</dbReference>
<dbReference type="EMBL" id="U00096">
    <property type="protein sequence ID" value="AAT48225.1"/>
    <property type="molecule type" value="Genomic_DNA"/>
</dbReference>
<dbReference type="EMBL" id="AP009048">
    <property type="protein sequence ID" value="BAE77475.1"/>
    <property type="molecule type" value="Genomic_DNA"/>
</dbReference>
<dbReference type="EMBL" id="X03155">
    <property type="status" value="NOT_ANNOTATED_CDS"/>
    <property type="molecule type" value="Genomic_DNA"/>
</dbReference>
<dbReference type="RefSeq" id="WP_000285362.1">
    <property type="nucleotide sequence ID" value="NZ_SSZK01000046.1"/>
</dbReference>
<dbReference type="RefSeq" id="YP_026267.1">
    <property type="nucleotide sequence ID" value="NC_000913.3"/>
</dbReference>
<dbReference type="SMR" id="P27848"/>
<dbReference type="BioGRID" id="4259609">
    <property type="interactions" value="13"/>
</dbReference>
<dbReference type="BioGRID" id="853515">
    <property type="interactions" value="2"/>
</dbReference>
<dbReference type="FunCoup" id="P27848">
    <property type="interactions" value="18"/>
</dbReference>
<dbReference type="IntAct" id="P27848">
    <property type="interactions" value="2"/>
</dbReference>
<dbReference type="STRING" id="511145.b3826"/>
<dbReference type="jPOST" id="P27848"/>
<dbReference type="PaxDb" id="511145-b3826"/>
<dbReference type="DNASU" id="2847768"/>
<dbReference type="EnsemblBacteria" id="AAT48225">
    <property type="protein sequence ID" value="AAT48225"/>
    <property type="gene ID" value="b3826"/>
</dbReference>
<dbReference type="GeneID" id="2847768"/>
<dbReference type="KEGG" id="ecj:JW5854"/>
<dbReference type="KEGG" id="eco:b3826"/>
<dbReference type="KEGG" id="ecoc:C3026_20705"/>
<dbReference type="PATRIC" id="fig|511145.12.peg.3942"/>
<dbReference type="EchoBASE" id="EB1438"/>
<dbReference type="eggNOG" id="COG0561">
    <property type="taxonomic scope" value="Bacteria"/>
</dbReference>
<dbReference type="HOGENOM" id="CLU_044146_5_2_6"/>
<dbReference type="InParanoid" id="P27848"/>
<dbReference type="OMA" id="CCAERGI"/>
<dbReference type="OrthoDB" id="5498330at2"/>
<dbReference type="PhylomeDB" id="P27848"/>
<dbReference type="BioCyc" id="EcoCyc:EG11470-MONOMER"/>
<dbReference type="BioCyc" id="MetaCyc:EG11470-MONOMER"/>
<dbReference type="PRO" id="PR:P27848"/>
<dbReference type="Proteomes" id="UP000000625">
    <property type="component" value="Chromosome"/>
</dbReference>
<dbReference type="GO" id="GO:0005829">
    <property type="term" value="C:cytosol"/>
    <property type="evidence" value="ECO:0000314"/>
    <property type="project" value="EcoCyc"/>
</dbReference>
<dbReference type="GO" id="GO:0000287">
    <property type="term" value="F:magnesium ion binding"/>
    <property type="evidence" value="ECO:0000314"/>
    <property type="project" value="UniProtKB"/>
</dbReference>
<dbReference type="GO" id="GO:0046872">
    <property type="term" value="F:metal ion binding"/>
    <property type="evidence" value="ECO:0000314"/>
    <property type="project" value="EcoliWiki"/>
</dbReference>
<dbReference type="GO" id="GO:0016791">
    <property type="term" value="F:phosphatase activity"/>
    <property type="evidence" value="ECO:0000314"/>
    <property type="project" value="EcoliWiki"/>
</dbReference>
<dbReference type="GO" id="GO:0033883">
    <property type="term" value="F:pyridoxal phosphatase activity"/>
    <property type="evidence" value="ECO:0000314"/>
    <property type="project" value="EcoliWiki"/>
</dbReference>
<dbReference type="GO" id="GO:0050308">
    <property type="term" value="F:sugar-phosphatase activity"/>
    <property type="evidence" value="ECO:0000314"/>
    <property type="project" value="EcoliWiki"/>
</dbReference>
<dbReference type="GO" id="GO:0006950">
    <property type="term" value="P:response to stress"/>
    <property type="evidence" value="ECO:0000315"/>
    <property type="project" value="EcoCyc"/>
</dbReference>
<dbReference type="CDD" id="cd07516">
    <property type="entry name" value="HAD_Pase"/>
    <property type="match status" value="1"/>
</dbReference>
<dbReference type="FunFam" id="3.30.1240.10:FF:000006">
    <property type="entry name" value="HAD superfamily hydrolase"/>
    <property type="match status" value="1"/>
</dbReference>
<dbReference type="Gene3D" id="3.30.1240.10">
    <property type="match status" value="1"/>
</dbReference>
<dbReference type="Gene3D" id="3.40.50.1000">
    <property type="entry name" value="HAD superfamily/HAD-like"/>
    <property type="match status" value="1"/>
</dbReference>
<dbReference type="InterPro" id="IPR000150">
    <property type="entry name" value="Cof"/>
</dbReference>
<dbReference type="InterPro" id="IPR036412">
    <property type="entry name" value="HAD-like_sf"/>
</dbReference>
<dbReference type="InterPro" id="IPR006379">
    <property type="entry name" value="HAD-SF_hydro_IIB"/>
</dbReference>
<dbReference type="InterPro" id="IPR023214">
    <property type="entry name" value="HAD_sf"/>
</dbReference>
<dbReference type="NCBIfam" id="TIGR00099">
    <property type="entry name" value="Cof-subfamily"/>
    <property type="match status" value="1"/>
</dbReference>
<dbReference type="NCBIfam" id="TIGR01484">
    <property type="entry name" value="HAD-SF-IIB"/>
    <property type="match status" value="1"/>
</dbReference>
<dbReference type="NCBIfam" id="NF008213">
    <property type="entry name" value="PRK10976.1"/>
    <property type="match status" value="1"/>
</dbReference>
<dbReference type="PANTHER" id="PTHR47267">
    <property type="match status" value="1"/>
</dbReference>
<dbReference type="PANTHER" id="PTHR47267:SF4">
    <property type="entry name" value="PYRIDOXAL PHOSPHATE PHOSPHATASE YIGL"/>
    <property type="match status" value="1"/>
</dbReference>
<dbReference type="Pfam" id="PF08282">
    <property type="entry name" value="Hydrolase_3"/>
    <property type="match status" value="1"/>
</dbReference>
<dbReference type="SFLD" id="SFLDG01144">
    <property type="entry name" value="C2.B.4:_PGP_Like"/>
    <property type="match status" value="1"/>
</dbReference>
<dbReference type="SFLD" id="SFLDS00003">
    <property type="entry name" value="Haloacid_Dehalogenase"/>
    <property type="match status" value="1"/>
</dbReference>
<dbReference type="SUPFAM" id="SSF56784">
    <property type="entry name" value="HAD-like"/>
    <property type="match status" value="1"/>
</dbReference>
<dbReference type="PROSITE" id="PS01228">
    <property type="entry name" value="COF_1"/>
    <property type="match status" value="1"/>
</dbReference>
<dbReference type="PROSITE" id="PS01229">
    <property type="entry name" value="COF_2"/>
    <property type="match status" value="1"/>
</dbReference>
<reference key="1">
    <citation type="journal article" date="1992" name="Science">
        <title>Analysis of the Escherichia coli genome: DNA sequence of the region from 84.5 to 86.5 minutes.</title>
        <authorList>
            <person name="Daniels D.L."/>
            <person name="Plunkett G. III"/>
            <person name="Burland V.D."/>
            <person name="Blattner F.R."/>
        </authorList>
    </citation>
    <scope>NUCLEOTIDE SEQUENCE [LARGE SCALE GENOMIC DNA]</scope>
    <source>
        <strain>K12 / MG1655 / ATCC 47076</strain>
    </source>
</reference>
<reference key="2">
    <citation type="journal article" date="1997" name="Science">
        <title>The complete genome sequence of Escherichia coli K-12.</title>
        <authorList>
            <person name="Blattner F.R."/>
            <person name="Plunkett G. III"/>
            <person name="Bloch C.A."/>
            <person name="Perna N.T."/>
            <person name="Burland V."/>
            <person name="Riley M."/>
            <person name="Collado-Vides J."/>
            <person name="Glasner J.D."/>
            <person name="Rode C.K."/>
            <person name="Mayhew G.F."/>
            <person name="Gregor J."/>
            <person name="Davis N.W."/>
            <person name="Kirkpatrick H.A."/>
            <person name="Goeden M.A."/>
            <person name="Rose D.J."/>
            <person name="Mau B."/>
            <person name="Shao Y."/>
        </authorList>
    </citation>
    <scope>NUCLEOTIDE SEQUENCE [LARGE SCALE GENOMIC DNA]</scope>
    <source>
        <strain>K12 / MG1655 / ATCC 47076</strain>
    </source>
</reference>
<reference key="3">
    <citation type="journal article" date="2006" name="Nucleic Acids Res.">
        <title>Escherichia coli K-12: a cooperatively developed annotation snapshot -- 2005.</title>
        <authorList>
            <person name="Riley M."/>
            <person name="Abe T."/>
            <person name="Arnaud M.B."/>
            <person name="Berlyn M.K.B."/>
            <person name="Blattner F.R."/>
            <person name="Chaudhuri R.R."/>
            <person name="Glasner J.D."/>
            <person name="Horiuchi T."/>
            <person name="Keseler I.M."/>
            <person name="Kosuge T."/>
            <person name="Mori H."/>
            <person name="Perna N.T."/>
            <person name="Plunkett G. III"/>
            <person name="Rudd K.E."/>
            <person name="Serres M.H."/>
            <person name="Thomas G.H."/>
            <person name="Thomson N.R."/>
            <person name="Wishart D."/>
            <person name="Wanner B.L."/>
        </authorList>
    </citation>
    <scope>SEQUENCE REVISION</scope>
</reference>
<reference key="4">
    <citation type="journal article" date="2006" name="Mol. Syst. Biol.">
        <title>Highly accurate genome sequences of Escherichia coli K-12 strains MG1655 and W3110.</title>
        <authorList>
            <person name="Hayashi K."/>
            <person name="Morooka N."/>
            <person name="Yamamoto Y."/>
            <person name="Fujita K."/>
            <person name="Isono K."/>
            <person name="Choi S."/>
            <person name="Ohtsubo E."/>
            <person name="Baba T."/>
            <person name="Wanner B.L."/>
            <person name="Mori H."/>
            <person name="Horiuchi T."/>
        </authorList>
    </citation>
    <scope>NUCLEOTIDE SEQUENCE [LARGE SCALE GENOMIC DNA]</scope>
    <source>
        <strain>K12 / W3110 / ATCC 27325 / DSM 5911</strain>
    </source>
</reference>
<reference key="5">
    <citation type="journal article" date="1985" name="J. Biochem.">
        <title>Nucleotide sequence of the pldB gene and characteristics of deduced amino acid sequence of lysophospholipase L2 in Escherichia coli.</title>
        <authorList>
            <person name="Kobayashi T."/>
            <person name="Kudo I."/>
            <person name="Karasawa K."/>
            <person name="Mizushima H."/>
            <person name="Inoue K."/>
            <person name="Nojima S."/>
        </authorList>
    </citation>
    <scope>NUCLEOTIDE SEQUENCE [GENOMIC DNA] OF 1-83</scope>
    <source>
        <strain>K12 / KL16-99</strain>
    </source>
</reference>
<reference key="6">
    <citation type="journal article" date="2006" name="J. Biol. Chem.">
        <title>Genome-wide analysis of substrate specificities of the Escherichia coli haloacid dehalogenase-like phosphatase family.</title>
        <authorList>
            <person name="Kuznetsova E."/>
            <person name="Proudfoot M."/>
            <person name="Gonzalez C.F."/>
            <person name="Brown G."/>
            <person name="Omelchenko M.V."/>
            <person name="Borozan I."/>
            <person name="Carmel L."/>
            <person name="Wolf Y.I."/>
            <person name="Mori H."/>
            <person name="Savchenko A.V."/>
            <person name="Arrowsmith C.H."/>
            <person name="Koonin E.V."/>
            <person name="Edwards A.M."/>
            <person name="Yakunin A.F."/>
        </authorList>
    </citation>
    <scope>FUNCTION AS A PHOSPHATASE</scope>
    <scope>CATALYTIC ACTIVITY</scope>
    <scope>BIOPHYSICOCHEMICAL PROPERTIES</scope>
    <scope>SUBSTRATE SPECIFICITY</scope>
    <scope>COFACTOR</scope>
</reference>
<evidence type="ECO:0000250" key="1"/>
<evidence type="ECO:0000269" key="2">
    <source>
    </source>
</evidence>
<evidence type="ECO:0000305" key="3"/>
<feature type="chain" id="PRO_0000054426" description="Pyridoxal phosphate phosphatase YigL">
    <location>
        <begin position="1"/>
        <end position="266"/>
    </location>
</feature>
<feature type="active site" description="Nucleophile" evidence="1">
    <location>
        <position position="8"/>
    </location>
</feature>
<feature type="binding site" evidence="1">
    <location>
        <position position="8"/>
    </location>
    <ligand>
        <name>Mg(2+)</name>
        <dbReference type="ChEBI" id="CHEBI:18420"/>
    </ligand>
</feature>
<feature type="binding site" evidence="1">
    <location>
        <position position="9"/>
    </location>
    <ligand>
        <name>phosphate</name>
        <dbReference type="ChEBI" id="CHEBI:43474"/>
    </ligand>
</feature>
<feature type="binding site" evidence="1">
    <location>
        <position position="10"/>
    </location>
    <ligand>
        <name>Mg(2+)</name>
        <dbReference type="ChEBI" id="CHEBI:18420"/>
    </ligand>
</feature>
<feature type="binding site" evidence="1">
    <location>
        <begin position="42"/>
        <end position="43"/>
    </location>
    <ligand>
        <name>phosphate</name>
        <dbReference type="ChEBI" id="CHEBI:43474"/>
    </ligand>
</feature>
<feature type="binding site" evidence="1">
    <location>
        <position position="191"/>
    </location>
    <ligand>
        <name>phosphate</name>
        <dbReference type="ChEBI" id="CHEBI:43474"/>
    </ligand>
</feature>
<feature type="binding site" evidence="1">
    <location>
        <position position="214"/>
    </location>
    <ligand>
        <name>Mg(2+)</name>
        <dbReference type="ChEBI" id="CHEBI:18420"/>
    </ligand>
</feature>
<feature type="binding site" evidence="1">
    <location>
        <position position="217"/>
    </location>
    <ligand>
        <name>phosphate</name>
        <dbReference type="ChEBI" id="CHEBI:43474"/>
    </ligand>
</feature>
<accession>P27848</accession>
<accession>P76763</accession>
<accession>Q2M8D1</accession>
<accession>Q6BEY9</accession>
<keyword id="KW-0378">Hydrolase</keyword>
<keyword id="KW-0460">Magnesium</keyword>
<keyword id="KW-0479">Metal-binding</keyword>
<keyword id="KW-1185">Reference proteome</keyword>
<proteinExistence type="evidence at protein level"/>